<dbReference type="EMBL" id="Z98756">
    <property type="protein sequence ID" value="CAB11442.1"/>
    <property type="molecule type" value="Genomic_DNA"/>
</dbReference>
<dbReference type="EMBL" id="AL583923">
    <property type="protein sequence ID" value="CAC30809.1"/>
    <property type="status" value="ALT_INIT"/>
    <property type="molecule type" value="Genomic_DNA"/>
</dbReference>
<dbReference type="PIR" id="A87141">
    <property type="entry name" value="A87141"/>
</dbReference>
<dbReference type="PIR" id="T45372">
    <property type="entry name" value="T45372"/>
</dbReference>
<dbReference type="RefSeq" id="WP_041323024.1">
    <property type="nucleotide sequence ID" value="NC_002677.1"/>
</dbReference>
<dbReference type="SMR" id="O32989"/>
<dbReference type="STRING" id="272631.gene:17575703"/>
<dbReference type="KEGG" id="mle:ML1855"/>
<dbReference type="Leproma" id="ML1855"/>
<dbReference type="eggNOG" id="COG0255">
    <property type="taxonomic scope" value="Bacteria"/>
</dbReference>
<dbReference type="HOGENOM" id="CLU_158491_3_3_11"/>
<dbReference type="Proteomes" id="UP000000806">
    <property type="component" value="Chromosome"/>
</dbReference>
<dbReference type="GO" id="GO:0022625">
    <property type="term" value="C:cytosolic large ribosomal subunit"/>
    <property type="evidence" value="ECO:0007669"/>
    <property type="project" value="TreeGrafter"/>
</dbReference>
<dbReference type="GO" id="GO:0003735">
    <property type="term" value="F:structural constituent of ribosome"/>
    <property type="evidence" value="ECO:0007669"/>
    <property type="project" value="InterPro"/>
</dbReference>
<dbReference type="GO" id="GO:0006412">
    <property type="term" value="P:translation"/>
    <property type="evidence" value="ECO:0007669"/>
    <property type="project" value="UniProtKB-UniRule"/>
</dbReference>
<dbReference type="CDD" id="cd00427">
    <property type="entry name" value="Ribosomal_L29_HIP"/>
    <property type="match status" value="1"/>
</dbReference>
<dbReference type="FunFam" id="1.10.287.310:FF:000001">
    <property type="entry name" value="50S ribosomal protein L29"/>
    <property type="match status" value="1"/>
</dbReference>
<dbReference type="Gene3D" id="1.10.287.310">
    <property type="match status" value="1"/>
</dbReference>
<dbReference type="HAMAP" id="MF_00374">
    <property type="entry name" value="Ribosomal_uL29"/>
    <property type="match status" value="1"/>
</dbReference>
<dbReference type="InterPro" id="IPR050063">
    <property type="entry name" value="Ribosomal_protein_uL29"/>
</dbReference>
<dbReference type="InterPro" id="IPR001854">
    <property type="entry name" value="Ribosomal_uL29"/>
</dbReference>
<dbReference type="InterPro" id="IPR018254">
    <property type="entry name" value="Ribosomal_uL29_CS"/>
</dbReference>
<dbReference type="InterPro" id="IPR036049">
    <property type="entry name" value="Ribosomal_uL29_sf"/>
</dbReference>
<dbReference type="NCBIfam" id="TIGR00012">
    <property type="entry name" value="L29"/>
    <property type="match status" value="1"/>
</dbReference>
<dbReference type="PANTHER" id="PTHR10916">
    <property type="entry name" value="60S RIBOSOMAL PROTEIN L35/50S RIBOSOMAL PROTEIN L29"/>
    <property type="match status" value="1"/>
</dbReference>
<dbReference type="PANTHER" id="PTHR10916:SF0">
    <property type="entry name" value="LARGE RIBOSOMAL SUBUNIT PROTEIN UL29C"/>
    <property type="match status" value="1"/>
</dbReference>
<dbReference type="Pfam" id="PF00831">
    <property type="entry name" value="Ribosomal_L29"/>
    <property type="match status" value="1"/>
</dbReference>
<dbReference type="SUPFAM" id="SSF46561">
    <property type="entry name" value="Ribosomal protein L29 (L29p)"/>
    <property type="match status" value="1"/>
</dbReference>
<dbReference type="PROSITE" id="PS00579">
    <property type="entry name" value="RIBOSOMAL_L29"/>
    <property type="match status" value="1"/>
</dbReference>
<gene>
    <name type="primary">rpmC</name>
    <name type="ordered locus">ML1855</name>
    <name type="ORF">MLCB2492.10</name>
</gene>
<keyword id="KW-1185">Reference proteome</keyword>
<keyword id="KW-0687">Ribonucleoprotein</keyword>
<keyword id="KW-0689">Ribosomal protein</keyword>
<comment type="similarity">
    <text evidence="1">Belongs to the universal ribosomal protein uL29 family.</text>
</comment>
<comment type="sequence caution" evidence="1">
    <conflict type="erroneous initiation">
        <sequence resource="EMBL-CDS" id="CAC30809"/>
    </conflict>
</comment>
<protein>
    <recommendedName>
        <fullName evidence="1">Large ribosomal subunit protein uL29</fullName>
    </recommendedName>
    <alternativeName>
        <fullName>50S ribosomal protein L29</fullName>
    </alternativeName>
</protein>
<name>RL29_MYCLE</name>
<organism>
    <name type="scientific">Mycobacterium leprae (strain TN)</name>
    <dbReference type="NCBI Taxonomy" id="272631"/>
    <lineage>
        <taxon>Bacteria</taxon>
        <taxon>Bacillati</taxon>
        <taxon>Actinomycetota</taxon>
        <taxon>Actinomycetes</taxon>
        <taxon>Mycobacteriales</taxon>
        <taxon>Mycobacteriaceae</taxon>
        <taxon>Mycobacterium</taxon>
    </lineage>
</organism>
<reference key="1">
    <citation type="journal article" date="2001" name="Nature">
        <title>Massive gene decay in the leprosy bacillus.</title>
        <authorList>
            <person name="Cole S.T."/>
            <person name="Eiglmeier K."/>
            <person name="Parkhill J."/>
            <person name="James K.D."/>
            <person name="Thomson N.R."/>
            <person name="Wheeler P.R."/>
            <person name="Honore N."/>
            <person name="Garnier T."/>
            <person name="Churcher C.M."/>
            <person name="Harris D.E."/>
            <person name="Mungall K.L."/>
            <person name="Basham D."/>
            <person name="Brown D."/>
            <person name="Chillingworth T."/>
            <person name="Connor R."/>
            <person name="Davies R.M."/>
            <person name="Devlin K."/>
            <person name="Duthoy S."/>
            <person name="Feltwell T."/>
            <person name="Fraser A."/>
            <person name="Hamlin N."/>
            <person name="Holroyd S."/>
            <person name="Hornsby T."/>
            <person name="Jagels K."/>
            <person name="Lacroix C."/>
            <person name="Maclean J."/>
            <person name="Moule S."/>
            <person name="Murphy L.D."/>
            <person name="Oliver K."/>
            <person name="Quail M.A."/>
            <person name="Rajandream M.A."/>
            <person name="Rutherford K.M."/>
            <person name="Rutter S."/>
            <person name="Seeger K."/>
            <person name="Simon S."/>
            <person name="Simmonds M."/>
            <person name="Skelton J."/>
            <person name="Squares R."/>
            <person name="Squares S."/>
            <person name="Stevens K."/>
            <person name="Taylor K."/>
            <person name="Whitehead S."/>
            <person name="Woodward J.R."/>
            <person name="Barrell B.G."/>
        </authorList>
    </citation>
    <scope>NUCLEOTIDE SEQUENCE [LARGE SCALE GENOMIC DNA]</scope>
    <source>
        <strain>TN</strain>
    </source>
</reference>
<accession>O32989</accession>
<proteinExistence type="inferred from homology"/>
<sequence length="80" mass="9081">MAVGISPGELRELTDEELIERLRESKEELFNLRFQMATGQLNNNRRLRTVRHEIARVYTVLRERELGLASGPGGANGEES</sequence>
<feature type="chain" id="PRO_0000130421" description="Large ribosomal subunit protein uL29">
    <location>
        <begin position="1"/>
        <end position="80"/>
    </location>
</feature>
<evidence type="ECO:0000305" key="1"/>